<proteinExistence type="inferred from homology"/>
<reference key="1">
    <citation type="journal article" date="2001" name="Proc. Natl. Acad. Sci. U.S.A.">
        <title>Complete genome sequence of Caulobacter crescentus.</title>
        <authorList>
            <person name="Nierman W.C."/>
            <person name="Feldblyum T.V."/>
            <person name="Laub M.T."/>
            <person name="Paulsen I.T."/>
            <person name="Nelson K.E."/>
            <person name="Eisen J.A."/>
            <person name="Heidelberg J.F."/>
            <person name="Alley M.R.K."/>
            <person name="Ohta N."/>
            <person name="Maddock J.R."/>
            <person name="Potocka I."/>
            <person name="Nelson W.C."/>
            <person name="Newton A."/>
            <person name="Stephens C."/>
            <person name="Phadke N.D."/>
            <person name="Ely B."/>
            <person name="DeBoy R.T."/>
            <person name="Dodson R.J."/>
            <person name="Durkin A.S."/>
            <person name="Gwinn M.L."/>
            <person name="Haft D.H."/>
            <person name="Kolonay J.F."/>
            <person name="Smit J."/>
            <person name="Craven M.B."/>
            <person name="Khouri H.M."/>
            <person name="Shetty J."/>
            <person name="Berry K.J."/>
            <person name="Utterback T.R."/>
            <person name="Tran K."/>
            <person name="Wolf A.M."/>
            <person name="Vamathevan J.J."/>
            <person name="Ermolaeva M.D."/>
            <person name="White O."/>
            <person name="Salzberg S.L."/>
            <person name="Venter J.C."/>
            <person name="Shapiro L."/>
            <person name="Fraser C.M."/>
        </authorList>
    </citation>
    <scope>NUCLEOTIDE SEQUENCE [LARGE SCALE GENOMIC DNA]</scope>
    <source>
        <strain>ATCC 19089 / CIP 103742 / CB 15</strain>
    </source>
</reference>
<name>ACPS_CAUVC</name>
<protein>
    <recommendedName>
        <fullName evidence="1">Holo-[acyl-carrier-protein] synthase</fullName>
        <shortName evidence="1">Holo-ACP synthase</shortName>
        <ecNumber evidence="1">2.7.8.7</ecNumber>
    </recommendedName>
    <alternativeName>
        <fullName evidence="1">4'-phosphopantetheinyl transferase AcpS</fullName>
    </alternativeName>
</protein>
<sequence>MIIGIGSDLCDIRRIEKSLERFGDRFTHKVFTETERTRSERKPDRASSYAKRFAAKEACSKALGTGLKRGVHLAGMGVVNLPSGQPTMALTGGALERLKAMVPEGMEPVIHLSLTDDHPYAQAFVIIEALPKR</sequence>
<gene>
    <name evidence="1" type="primary">acpS</name>
    <name type="ordered locus">CC_1558</name>
</gene>
<accession>Q9A807</accession>
<feature type="chain" id="PRO_0000175629" description="Holo-[acyl-carrier-protein] synthase">
    <location>
        <begin position="1"/>
        <end position="133"/>
    </location>
</feature>
<feature type="binding site" evidence="1">
    <location>
        <position position="8"/>
    </location>
    <ligand>
        <name>Mg(2+)</name>
        <dbReference type="ChEBI" id="CHEBI:18420"/>
    </ligand>
</feature>
<feature type="binding site" evidence="1">
    <location>
        <position position="57"/>
    </location>
    <ligand>
        <name>Mg(2+)</name>
        <dbReference type="ChEBI" id="CHEBI:18420"/>
    </ligand>
</feature>
<keyword id="KW-0963">Cytoplasm</keyword>
<keyword id="KW-0275">Fatty acid biosynthesis</keyword>
<keyword id="KW-0276">Fatty acid metabolism</keyword>
<keyword id="KW-0444">Lipid biosynthesis</keyword>
<keyword id="KW-0443">Lipid metabolism</keyword>
<keyword id="KW-0460">Magnesium</keyword>
<keyword id="KW-0479">Metal-binding</keyword>
<keyword id="KW-1185">Reference proteome</keyword>
<keyword id="KW-0808">Transferase</keyword>
<comment type="function">
    <text evidence="1">Transfers the 4'-phosphopantetheine moiety from coenzyme A to a Ser of acyl-carrier-protein.</text>
</comment>
<comment type="catalytic activity">
    <reaction evidence="1">
        <text>apo-[ACP] + CoA = holo-[ACP] + adenosine 3',5'-bisphosphate + H(+)</text>
        <dbReference type="Rhea" id="RHEA:12068"/>
        <dbReference type="Rhea" id="RHEA-COMP:9685"/>
        <dbReference type="Rhea" id="RHEA-COMP:9690"/>
        <dbReference type="ChEBI" id="CHEBI:15378"/>
        <dbReference type="ChEBI" id="CHEBI:29999"/>
        <dbReference type="ChEBI" id="CHEBI:57287"/>
        <dbReference type="ChEBI" id="CHEBI:58343"/>
        <dbReference type="ChEBI" id="CHEBI:64479"/>
        <dbReference type="EC" id="2.7.8.7"/>
    </reaction>
</comment>
<comment type="cofactor">
    <cofactor evidence="1">
        <name>Mg(2+)</name>
        <dbReference type="ChEBI" id="CHEBI:18420"/>
    </cofactor>
</comment>
<comment type="subcellular location">
    <subcellularLocation>
        <location evidence="1">Cytoplasm</location>
    </subcellularLocation>
</comment>
<comment type="similarity">
    <text evidence="1">Belongs to the P-Pant transferase superfamily. AcpS family.</text>
</comment>
<dbReference type="EC" id="2.7.8.7" evidence="1"/>
<dbReference type="EMBL" id="AE005673">
    <property type="protein sequence ID" value="AAK23537.1"/>
    <property type="molecule type" value="Genomic_DNA"/>
</dbReference>
<dbReference type="PIR" id="E87442">
    <property type="entry name" value="E87442"/>
</dbReference>
<dbReference type="RefSeq" id="NP_420369.1">
    <property type="nucleotide sequence ID" value="NC_002696.2"/>
</dbReference>
<dbReference type="RefSeq" id="WP_010919432.1">
    <property type="nucleotide sequence ID" value="NC_002696.2"/>
</dbReference>
<dbReference type="SMR" id="Q9A807"/>
<dbReference type="STRING" id="190650.CC_1558"/>
<dbReference type="EnsemblBacteria" id="AAK23537">
    <property type="protein sequence ID" value="AAK23537"/>
    <property type="gene ID" value="CC_1558"/>
</dbReference>
<dbReference type="KEGG" id="ccr:CC_1558"/>
<dbReference type="PATRIC" id="fig|190650.5.peg.1586"/>
<dbReference type="eggNOG" id="COG0736">
    <property type="taxonomic scope" value="Bacteria"/>
</dbReference>
<dbReference type="HOGENOM" id="CLU_089696_0_2_5"/>
<dbReference type="BioCyc" id="CAULO:CC1558-MONOMER"/>
<dbReference type="Proteomes" id="UP000001816">
    <property type="component" value="Chromosome"/>
</dbReference>
<dbReference type="GO" id="GO:0005737">
    <property type="term" value="C:cytoplasm"/>
    <property type="evidence" value="ECO:0007669"/>
    <property type="project" value="UniProtKB-SubCell"/>
</dbReference>
<dbReference type="GO" id="GO:0008897">
    <property type="term" value="F:holo-[acyl-carrier-protein] synthase activity"/>
    <property type="evidence" value="ECO:0007669"/>
    <property type="project" value="UniProtKB-UniRule"/>
</dbReference>
<dbReference type="GO" id="GO:0000287">
    <property type="term" value="F:magnesium ion binding"/>
    <property type="evidence" value="ECO:0007669"/>
    <property type="project" value="UniProtKB-UniRule"/>
</dbReference>
<dbReference type="GO" id="GO:0006633">
    <property type="term" value="P:fatty acid biosynthetic process"/>
    <property type="evidence" value="ECO:0007669"/>
    <property type="project" value="UniProtKB-UniRule"/>
</dbReference>
<dbReference type="Gene3D" id="3.90.470.20">
    <property type="entry name" value="4'-phosphopantetheinyl transferase domain"/>
    <property type="match status" value="1"/>
</dbReference>
<dbReference type="HAMAP" id="MF_00101">
    <property type="entry name" value="AcpS"/>
    <property type="match status" value="1"/>
</dbReference>
<dbReference type="InterPro" id="IPR008278">
    <property type="entry name" value="4-PPantetheinyl_Trfase_dom"/>
</dbReference>
<dbReference type="InterPro" id="IPR037143">
    <property type="entry name" value="4-PPantetheinyl_Trfase_dom_sf"/>
</dbReference>
<dbReference type="InterPro" id="IPR002582">
    <property type="entry name" value="ACPS"/>
</dbReference>
<dbReference type="InterPro" id="IPR004568">
    <property type="entry name" value="Ppantetheine-prot_Trfase_dom"/>
</dbReference>
<dbReference type="NCBIfam" id="TIGR00516">
    <property type="entry name" value="acpS"/>
    <property type="match status" value="1"/>
</dbReference>
<dbReference type="NCBIfam" id="TIGR00556">
    <property type="entry name" value="pantethn_trn"/>
    <property type="match status" value="1"/>
</dbReference>
<dbReference type="Pfam" id="PF01648">
    <property type="entry name" value="ACPS"/>
    <property type="match status" value="1"/>
</dbReference>
<dbReference type="SUPFAM" id="SSF56214">
    <property type="entry name" value="4'-phosphopantetheinyl transferase"/>
    <property type="match status" value="1"/>
</dbReference>
<evidence type="ECO:0000255" key="1">
    <source>
        <dbReference type="HAMAP-Rule" id="MF_00101"/>
    </source>
</evidence>
<organism>
    <name type="scientific">Caulobacter vibrioides (strain ATCC 19089 / CIP 103742 / CB 15)</name>
    <name type="common">Caulobacter crescentus</name>
    <dbReference type="NCBI Taxonomy" id="190650"/>
    <lineage>
        <taxon>Bacteria</taxon>
        <taxon>Pseudomonadati</taxon>
        <taxon>Pseudomonadota</taxon>
        <taxon>Alphaproteobacteria</taxon>
        <taxon>Caulobacterales</taxon>
        <taxon>Caulobacteraceae</taxon>
        <taxon>Caulobacter</taxon>
    </lineage>
</organism>